<feature type="chain" id="PRO_0000416095" description="Protein TOPAZ1">
    <location>
        <begin position="1"/>
        <end position="1599"/>
    </location>
</feature>
<feature type="region of interest" description="Disordered" evidence="2">
    <location>
        <begin position="1"/>
        <end position="42"/>
    </location>
</feature>
<feature type="region of interest" description="Disordered" evidence="2">
    <location>
        <begin position="159"/>
        <end position="185"/>
    </location>
</feature>
<feature type="region of interest" description="Disordered" evidence="2">
    <location>
        <begin position="802"/>
        <end position="836"/>
    </location>
</feature>
<feature type="region of interest" description="Disordered" evidence="2">
    <location>
        <begin position="867"/>
        <end position="889"/>
    </location>
</feature>
<feature type="compositionally biased region" description="Basic and acidic residues" evidence="2">
    <location>
        <begin position="168"/>
        <end position="183"/>
    </location>
</feature>
<feature type="compositionally biased region" description="Basic and acidic residues" evidence="2">
    <location>
        <begin position="805"/>
        <end position="832"/>
    </location>
</feature>
<feature type="compositionally biased region" description="Polar residues" evidence="2">
    <location>
        <begin position="874"/>
        <end position="884"/>
    </location>
</feature>
<feature type="sequence conflict" description="In Ref. 1; ADK36690." evidence="5" ref="1">
    <original>Y</original>
    <variation>C</variation>
    <location>
        <position position="324"/>
    </location>
</feature>
<feature type="sequence conflict" description="In Ref. 1; ADK36690." evidence="5" ref="1">
    <original>V</original>
    <variation>L</variation>
    <location>
        <position position="333"/>
    </location>
</feature>
<feature type="sequence conflict" description="In Ref. 1; ADK36690." evidence="5" ref="1">
    <original>L</original>
    <variation>M</variation>
    <location>
        <position position="797"/>
    </location>
</feature>
<feature type="sequence conflict" description="In Ref. 1; ADK36690." evidence="5" ref="1">
    <original>L</original>
    <variation>V</variation>
    <location>
        <position position="971"/>
    </location>
</feature>
<feature type="sequence conflict" description="In Ref. 1; ADK36690." evidence="5" ref="1">
    <original>G</original>
    <variation>R</variation>
    <location>
        <position position="1289"/>
    </location>
</feature>
<feature type="sequence conflict" description="In Ref. 1; ADK36690." evidence="5" ref="1">
    <original>KIHC</original>
    <variation>LKIHF</variation>
    <location>
        <begin position="1299"/>
        <end position="1302"/>
    </location>
</feature>
<feature type="sequence conflict" description="In Ref. 1; ADK36690." evidence="5" ref="1">
    <original>N</original>
    <variation>I</variation>
    <location>
        <position position="1349"/>
    </location>
</feature>
<feature type="sequence conflict" description="In Ref. 1; ADK36690." evidence="5" ref="1">
    <original>HY</original>
    <variation>PH</variation>
    <location>
        <begin position="1463"/>
        <end position="1464"/>
    </location>
</feature>
<feature type="sequence conflict" description="In Ref. 1; ADK36690." evidence="5" ref="1">
    <original>L</original>
    <variation>S</variation>
    <location>
        <position position="1476"/>
    </location>
</feature>
<feature type="sequence conflict" description="In Ref. 1; ADK36690." evidence="5" ref="1">
    <original>Y</original>
    <variation>H</variation>
    <location>
        <position position="1539"/>
    </location>
</feature>
<feature type="sequence conflict" description="In Ref. 1; ADK36690." evidence="5" ref="1">
    <original>GV</original>
    <variation>AG</variation>
    <location>
        <begin position="1590"/>
        <end position="1591"/>
    </location>
</feature>
<sequence length="1599" mass="180026">MVAQASGKEVESDKSAKEKRKVTEASSDDPQPGIDLVRKESLTSSESFPTVECSEFQSMAFLQSLGKERLVEGIKRRIRIKKFKSLESPALKMTENKATQNSKVEFQDELYKNTLKYSCNSLSPGVENNSTLKLHDCSCLSHSKDCNDENNLAYKPDGGCMHVPENSSKSKKENPRSLIDKTDPSNIPQLLQTEENLMRVSQLLLEENDSYLSKNNGMFSCLQSEKNKHSIEESSIGRKSRKRMKVSEKGNGMVIEMKFSNMCNKSELMLQGNQTGAEGKETETLEAKKSSLKVLRKVNNNTLSPMDPLLSLPETGKKTSPEHYANAVFQKAVEQLSKEETKNVSQPLGCTSMDPPEDYFKSMKNSLVKSLSDCFPIEKRSSREGLKNEAEESKYSCHRTIPMTGKRTWPCYSCARISAQCWKKASLPQSSRQDDFLRHQMNQTHLSDSKLMLQSSVTETNSASSSIEKLDSNLNCLPSVSTVEPTSVVIKEPIVNDDEKMKSEELSRSASEVVSNITEDTPLTNVTHNSTGSKKKDRGNLTKLNLMVASQDGQEASNSTGKTVHRKACITKQALVVPDLVKILNTGRLTNFKIPLLKNKTEKRKEINAKSSEREVYSPLELLDSLSGAEVRQSRTKENTVTVTSGPQSLSIQHSVIPVQASSDSFCSKNSCIIAPSFLKQGNNNKPSSHISASGHIISNKAAGSLTVENNTFSCDPGCIEKNPTFYSNEQEPFKAVSSEVSGRKMSKNFSEIKVGFPDILKAYEDDVLLIDVIQDDPDLFGVSSEGELSFPSEVPLISQEPNVAEEHQSADSKHMELPEKKEPSDHLRELPVPDPGSVKSEICASLSAASEIKHDSKDANISLGEVTHETSSNEKPGGLSEQTKSSDLDEKCRFSDKVAIREEKETISEVFRSDSKNTEIMVGECHLAALVSKPLCLPVPLPPLNLSTHQEDTLLNPWMNDFRLPGKHSLLKLQNPEICEIFKREKNLGVFQKPLGLIIPHRYCKFHFNTIRGCERSQCKFAHVPEQGDEKVCMDVFKKYISISELCLLQRAANMFMEYYRKFLPGIHFDLQVLNDLLNSLLKHCLLKEVFQIMNLCIMIKMLPALKILLKIFEYVATMKLRNAVPALIDMFCKLVEAGMVLDLEHFNYIVKLLYQVQASKQEITAVLEMKSRLRMRQFKKNWKCDLEAALNEIEHCKEKGDWTKLGNVYLNIKMSCEKFADFQRFCAYIAEILTKDCKEERPGVPFCEFAETVSKDLQNSEVDKTLLGRIGISAMYFYHKLLQWSKGRKVLDKLYEKIHCTSLKGLIGPEKLAPRCQIVNIAAEIFLKSGSLDGAIWVLRESEWIINTPVWPCDRLDVLNRHNLLCTIAHEILAKSLYRQTFEVLQNLPGFQNSQETVEVSQYSLLFNKLLDACIESNSLGMSSSVAEFMISKSIPIDFSFLRRLITSLGRSCLWLKARAHYKSALSLGCYPPLEGNLYRKLLLIPSYLSEIEMLLAIEIFLVSNASSIQSPGTSTQMLQIVLKRSEENKSRSKDDYQAAVERLIMAARISDPKLFIKHMTVNVNKEQVYSLEHCSALKWLKENMKWGVKVWLFNNR</sequence>
<dbReference type="EMBL" id="HM631979">
    <property type="protein sequence ID" value="ADK36690.1"/>
    <property type="molecule type" value="mRNA"/>
</dbReference>
<dbReference type="EMBL" id="AMGL01044446">
    <property type="status" value="NOT_ANNOTATED_CDS"/>
    <property type="molecule type" value="Genomic_DNA"/>
</dbReference>
<dbReference type="EMBL" id="AMGL01044447">
    <property type="status" value="NOT_ANNOTATED_CDS"/>
    <property type="molecule type" value="Genomic_DNA"/>
</dbReference>
<dbReference type="EMBL" id="AMGL01044448">
    <property type="status" value="NOT_ANNOTATED_CDS"/>
    <property type="molecule type" value="Genomic_DNA"/>
</dbReference>
<dbReference type="STRING" id="9940.ENSOARP00000004594"/>
<dbReference type="PaxDb" id="9940-ENSOARP00000004594"/>
<dbReference type="eggNOG" id="ENOG502QPIV">
    <property type="taxonomic scope" value="Eukaryota"/>
</dbReference>
<dbReference type="HOGENOM" id="CLU_003190_0_0_1"/>
<dbReference type="Proteomes" id="UP000002356">
    <property type="component" value="Unplaced"/>
</dbReference>
<dbReference type="GO" id="GO:0005829">
    <property type="term" value="C:cytosol"/>
    <property type="evidence" value="ECO:0007669"/>
    <property type="project" value="UniProtKB-SubCell"/>
</dbReference>
<dbReference type="GO" id="GO:0046872">
    <property type="term" value="F:metal ion binding"/>
    <property type="evidence" value="ECO:0007669"/>
    <property type="project" value="InterPro"/>
</dbReference>
<dbReference type="GO" id="GO:0030154">
    <property type="term" value="P:cell differentiation"/>
    <property type="evidence" value="ECO:0007669"/>
    <property type="project" value="UniProtKB-KW"/>
</dbReference>
<dbReference type="GO" id="GO:0048137">
    <property type="term" value="P:spermatocyte division"/>
    <property type="evidence" value="ECO:0007669"/>
    <property type="project" value="TreeGrafter"/>
</dbReference>
<dbReference type="InterPro" id="IPR038952">
    <property type="entry name" value="TOPAZ1"/>
</dbReference>
<dbReference type="InterPro" id="IPR029435">
    <property type="entry name" value="TOPAZ1_dom"/>
</dbReference>
<dbReference type="InterPro" id="IPR000571">
    <property type="entry name" value="Znf_CCCH"/>
</dbReference>
<dbReference type="PANTHER" id="PTHR35671">
    <property type="entry name" value="PROTEIN TOPAZ1"/>
    <property type="match status" value="1"/>
</dbReference>
<dbReference type="PANTHER" id="PTHR35671:SF1">
    <property type="entry name" value="PROTEIN TOPAZ1"/>
    <property type="match status" value="1"/>
</dbReference>
<dbReference type="Pfam" id="PF14669">
    <property type="entry name" value="Asp_Glu_race_2"/>
    <property type="match status" value="1"/>
</dbReference>
<proteinExistence type="evidence at protein level"/>
<gene>
    <name type="primary">TOPAZ1</name>
</gene>
<organism>
    <name type="scientific">Ovis aries</name>
    <name type="common">Sheep</name>
    <dbReference type="NCBI Taxonomy" id="9940"/>
    <lineage>
        <taxon>Eukaryota</taxon>
        <taxon>Metazoa</taxon>
        <taxon>Chordata</taxon>
        <taxon>Craniata</taxon>
        <taxon>Vertebrata</taxon>
        <taxon>Euteleostomi</taxon>
        <taxon>Mammalia</taxon>
        <taxon>Eutheria</taxon>
        <taxon>Laurasiatheria</taxon>
        <taxon>Artiodactyla</taxon>
        <taxon>Ruminantia</taxon>
        <taxon>Pecora</taxon>
        <taxon>Bovidae</taxon>
        <taxon>Caprinae</taxon>
        <taxon>Ovis</taxon>
    </lineage>
</organism>
<accession>E5FYH0</accession>
<accession>W5P2E5</accession>
<reference key="1">
    <citation type="journal article" date="2011" name="PLoS ONE">
        <title>TOPAZ1, a novel germ cell-specific expressed gene conserved during evolution across vertebrates.</title>
        <authorList>
            <person name="Baillet A."/>
            <person name="Le Bouffant R."/>
            <person name="Volff J.N."/>
            <person name="Luangpraseuth A."/>
            <person name="Poumerol E."/>
            <person name="Thepot D."/>
            <person name="Pailhoux E."/>
            <person name="Livera G."/>
            <person name="Cotinot C."/>
            <person name="Mandon-Pepin B."/>
        </authorList>
    </citation>
    <scope>NUCLEOTIDE SEQUENCE [MRNA]</scope>
    <scope>SUBCELLULAR LOCATION</scope>
    <scope>TISSUE SPECIFICITY</scope>
    <scope>DEVELOPMENTAL STAGE</scope>
    <source>
        <tissue>Embryonic ovary</tissue>
    </source>
</reference>
<reference key="2">
    <citation type="journal article" date="2010" name="Anim. Genet.">
        <title>The sheep genome reference sequence: a work in progress.</title>
        <authorList>
            <person name="Archibald A.L."/>
            <person name="Cockett N.E."/>
            <person name="Dalrymple B.P."/>
            <person name="Faraut T."/>
            <person name="Kijas J.W."/>
            <person name="Maddox J.F."/>
            <person name="McEwan J.C."/>
            <person name="Hutton Oddy V."/>
            <person name="Raadsma H.W."/>
            <person name="Wade C."/>
            <person name="Wang J."/>
            <person name="Wang W."/>
            <person name="Xun X."/>
        </authorList>
    </citation>
    <scope>NUCLEOTIDE SEQUENCE [LARGE SCALE GENOMIC DNA]</scope>
    <source>
        <strain>Texel</strain>
    </source>
</reference>
<protein>
    <recommendedName>
        <fullName evidence="5">Protein TOPAZ1</fullName>
    </recommendedName>
    <alternativeName>
        <fullName evidence="4">Testis- and ovary-specific PAZ domain-containing protein 1</fullName>
    </alternativeName>
</protein>
<name>TOPZ1_SHEEP</name>
<keyword id="KW-0963">Cytoplasm</keyword>
<keyword id="KW-0221">Differentiation</keyword>
<keyword id="KW-1185">Reference proteome</keyword>
<keyword id="KW-0744">Spermatogenesis</keyword>
<comment type="function">
    <text evidence="1">Important for normal spermatogenesis and male fertility. Specifically required for progression to the post-meiotic stages of spermatocyte development. Seems to be necessary for normal expression levels of a number of testis-expressed gene transcripts, although its role in this process is unclear.</text>
</comment>
<comment type="subcellular location">
    <subcellularLocation>
        <location evidence="3">Cytoplasm</location>
        <location evidence="3">Cytosol</location>
    </subcellularLocation>
</comment>
<comment type="tissue specificity">
    <text evidence="3">Expressed in both adult testis and fetal ovary, mostly in germ cells (at protein level).</text>
</comment>
<comment type="developmental stage">
    <text evidence="3">Expression increases in the ovary during the meiosis prophase I period at 55-65 dpc and decreases until the end of the fetal life and then remains very low in adult ovary. Low expression in testis throughout fetal development.</text>
</comment>
<evidence type="ECO:0000250" key="1">
    <source>
        <dbReference type="UniProtKB" id="E5FYH1"/>
    </source>
</evidence>
<evidence type="ECO:0000256" key="2">
    <source>
        <dbReference type="SAM" id="MobiDB-lite"/>
    </source>
</evidence>
<evidence type="ECO:0000269" key="3">
    <source>
    </source>
</evidence>
<evidence type="ECO:0000303" key="4">
    <source>
    </source>
</evidence>
<evidence type="ECO:0000305" key="5"/>